<gene>
    <name evidence="1" type="primary">pyrE</name>
    <name type="ordered locus">AF_1741</name>
</gene>
<accession>O28533</accession>
<keyword id="KW-0328">Glycosyltransferase</keyword>
<keyword id="KW-0460">Magnesium</keyword>
<keyword id="KW-0665">Pyrimidine biosynthesis</keyword>
<keyword id="KW-1185">Reference proteome</keyword>
<keyword id="KW-0808">Transferase</keyword>
<feature type="chain" id="PRO_0000110775" description="Orotate phosphoribosyltransferase">
    <location>
        <begin position="1"/>
        <end position="178"/>
    </location>
</feature>
<feature type="binding site" evidence="1">
    <location>
        <position position="92"/>
    </location>
    <ligand>
        <name>5-phospho-alpha-D-ribose 1-diphosphate</name>
        <dbReference type="ChEBI" id="CHEBI:58017"/>
        <note>ligand shared between dimeric partners</note>
    </ligand>
</feature>
<feature type="binding site" description="in other chain" evidence="1">
    <location>
        <position position="93"/>
    </location>
    <ligand>
        <name>5-phospho-alpha-D-ribose 1-diphosphate</name>
        <dbReference type="ChEBI" id="CHEBI:58017"/>
        <note>ligand shared between dimeric partners</note>
    </ligand>
</feature>
<feature type="binding site" evidence="1">
    <location>
        <position position="96"/>
    </location>
    <ligand>
        <name>5-phospho-alpha-D-ribose 1-diphosphate</name>
        <dbReference type="ChEBI" id="CHEBI:58017"/>
        <note>ligand shared between dimeric partners</note>
    </ligand>
</feature>
<feature type="binding site" description="in other chain" evidence="1">
    <location>
        <begin position="118"/>
        <end position="126"/>
    </location>
    <ligand>
        <name>5-phospho-alpha-D-ribose 1-diphosphate</name>
        <dbReference type="ChEBI" id="CHEBI:58017"/>
        <note>ligand shared between dimeric partners</note>
    </ligand>
</feature>
<feature type="binding site" evidence="1">
    <location>
        <position position="122"/>
    </location>
    <ligand>
        <name>orotate</name>
        <dbReference type="ChEBI" id="CHEBI:30839"/>
    </ligand>
</feature>
<feature type="binding site" evidence="1">
    <location>
        <position position="150"/>
    </location>
    <ligand>
        <name>orotate</name>
        <dbReference type="ChEBI" id="CHEBI:30839"/>
    </ligand>
</feature>
<comment type="function">
    <text evidence="1">Catalyzes the transfer of a ribosyl phosphate group from 5-phosphoribose 1-diphosphate to orotate, leading to the formation of orotidine monophosphate (OMP).</text>
</comment>
<comment type="catalytic activity">
    <reaction evidence="1">
        <text>orotidine 5'-phosphate + diphosphate = orotate + 5-phospho-alpha-D-ribose 1-diphosphate</text>
        <dbReference type="Rhea" id="RHEA:10380"/>
        <dbReference type="ChEBI" id="CHEBI:30839"/>
        <dbReference type="ChEBI" id="CHEBI:33019"/>
        <dbReference type="ChEBI" id="CHEBI:57538"/>
        <dbReference type="ChEBI" id="CHEBI:58017"/>
        <dbReference type="EC" id="2.4.2.10"/>
    </reaction>
</comment>
<comment type="cofactor">
    <cofactor evidence="1">
        <name>Mg(2+)</name>
        <dbReference type="ChEBI" id="CHEBI:18420"/>
    </cofactor>
</comment>
<comment type="pathway">
    <text evidence="1">Pyrimidine metabolism; UMP biosynthesis via de novo pathway; UMP from orotate: step 1/2.</text>
</comment>
<comment type="subunit">
    <text evidence="1">Homodimer.</text>
</comment>
<comment type="similarity">
    <text evidence="1">Belongs to the purine/pyrimidine phosphoribosyltransferase family. PyrE subfamily.</text>
</comment>
<reference key="1">
    <citation type="journal article" date="1997" name="Nature">
        <title>The complete genome sequence of the hyperthermophilic, sulphate-reducing archaeon Archaeoglobus fulgidus.</title>
        <authorList>
            <person name="Klenk H.-P."/>
            <person name="Clayton R.A."/>
            <person name="Tomb J.-F."/>
            <person name="White O."/>
            <person name="Nelson K.E."/>
            <person name="Ketchum K.A."/>
            <person name="Dodson R.J."/>
            <person name="Gwinn M.L."/>
            <person name="Hickey E.K."/>
            <person name="Peterson J.D."/>
            <person name="Richardson D.L."/>
            <person name="Kerlavage A.R."/>
            <person name="Graham D.E."/>
            <person name="Kyrpides N.C."/>
            <person name="Fleischmann R.D."/>
            <person name="Quackenbush J."/>
            <person name="Lee N.H."/>
            <person name="Sutton G.G."/>
            <person name="Gill S.R."/>
            <person name="Kirkness E.F."/>
            <person name="Dougherty B.A."/>
            <person name="McKenney K."/>
            <person name="Adams M.D."/>
            <person name="Loftus B.J."/>
            <person name="Peterson S.N."/>
            <person name="Reich C.I."/>
            <person name="McNeil L.K."/>
            <person name="Badger J.H."/>
            <person name="Glodek A."/>
            <person name="Zhou L."/>
            <person name="Overbeek R."/>
            <person name="Gocayne J.D."/>
            <person name="Weidman J.F."/>
            <person name="McDonald L.A."/>
            <person name="Utterback T.R."/>
            <person name="Cotton M.D."/>
            <person name="Spriggs T."/>
            <person name="Artiach P."/>
            <person name="Kaine B.P."/>
            <person name="Sykes S.M."/>
            <person name="Sadow P.W."/>
            <person name="D'Andrea K.P."/>
            <person name="Bowman C."/>
            <person name="Fujii C."/>
            <person name="Garland S.A."/>
            <person name="Mason T.M."/>
            <person name="Olsen G.J."/>
            <person name="Fraser C.M."/>
            <person name="Smith H.O."/>
            <person name="Woese C.R."/>
            <person name="Venter J.C."/>
        </authorList>
    </citation>
    <scope>NUCLEOTIDE SEQUENCE [LARGE SCALE GENOMIC DNA]</scope>
    <source>
        <strain>ATCC 49558 / DSM 4304 / JCM 9628 / NBRC 100126 / VC-16</strain>
    </source>
</reference>
<dbReference type="EC" id="2.4.2.10" evidence="1"/>
<dbReference type="EMBL" id="AE000782">
    <property type="protein sequence ID" value="AAB89504.1"/>
    <property type="molecule type" value="Genomic_DNA"/>
</dbReference>
<dbReference type="PIR" id="D69467">
    <property type="entry name" value="D69467"/>
</dbReference>
<dbReference type="RefSeq" id="WP_010879237.1">
    <property type="nucleotide sequence ID" value="NC_000917.1"/>
</dbReference>
<dbReference type="SMR" id="O28533"/>
<dbReference type="STRING" id="224325.AF_1741"/>
<dbReference type="PaxDb" id="224325-AF_1741"/>
<dbReference type="EnsemblBacteria" id="AAB89504">
    <property type="protein sequence ID" value="AAB89504"/>
    <property type="gene ID" value="AF_1741"/>
</dbReference>
<dbReference type="GeneID" id="24795485"/>
<dbReference type="KEGG" id="afu:AF_1741"/>
<dbReference type="eggNOG" id="arCOG00029">
    <property type="taxonomic scope" value="Archaea"/>
</dbReference>
<dbReference type="HOGENOM" id="CLU_074878_2_0_2"/>
<dbReference type="OrthoDB" id="9089at2157"/>
<dbReference type="PhylomeDB" id="O28533"/>
<dbReference type="UniPathway" id="UPA00070">
    <property type="reaction ID" value="UER00119"/>
</dbReference>
<dbReference type="Proteomes" id="UP000002199">
    <property type="component" value="Chromosome"/>
</dbReference>
<dbReference type="GO" id="GO:0000287">
    <property type="term" value="F:magnesium ion binding"/>
    <property type="evidence" value="ECO:0007669"/>
    <property type="project" value="UniProtKB-UniRule"/>
</dbReference>
<dbReference type="GO" id="GO:0004588">
    <property type="term" value="F:orotate phosphoribosyltransferase activity"/>
    <property type="evidence" value="ECO:0007669"/>
    <property type="project" value="UniProtKB-UniRule"/>
</dbReference>
<dbReference type="GO" id="GO:0044205">
    <property type="term" value="P:'de novo' UMP biosynthetic process"/>
    <property type="evidence" value="ECO:0007669"/>
    <property type="project" value="UniProtKB-UniRule"/>
</dbReference>
<dbReference type="GO" id="GO:0019856">
    <property type="term" value="P:pyrimidine nucleobase biosynthetic process"/>
    <property type="evidence" value="ECO:0007669"/>
    <property type="project" value="TreeGrafter"/>
</dbReference>
<dbReference type="CDD" id="cd06223">
    <property type="entry name" value="PRTases_typeI"/>
    <property type="match status" value="1"/>
</dbReference>
<dbReference type="Gene3D" id="3.40.50.2020">
    <property type="match status" value="1"/>
</dbReference>
<dbReference type="HAMAP" id="MF_01208">
    <property type="entry name" value="PyrE"/>
    <property type="match status" value="1"/>
</dbReference>
<dbReference type="InterPro" id="IPR023031">
    <property type="entry name" value="OPRT"/>
</dbReference>
<dbReference type="InterPro" id="IPR004467">
    <property type="entry name" value="Or_phspho_trans_dom"/>
</dbReference>
<dbReference type="InterPro" id="IPR000836">
    <property type="entry name" value="PRibTrfase_dom"/>
</dbReference>
<dbReference type="InterPro" id="IPR029057">
    <property type="entry name" value="PRTase-like"/>
</dbReference>
<dbReference type="NCBIfam" id="TIGR00336">
    <property type="entry name" value="pyrE"/>
    <property type="match status" value="1"/>
</dbReference>
<dbReference type="PANTHER" id="PTHR19278">
    <property type="entry name" value="OROTATE PHOSPHORIBOSYLTRANSFERASE"/>
    <property type="match status" value="1"/>
</dbReference>
<dbReference type="PANTHER" id="PTHR19278:SF9">
    <property type="entry name" value="URIDINE 5'-MONOPHOSPHATE SYNTHASE"/>
    <property type="match status" value="1"/>
</dbReference>
<dbReference type="Pfam" id="PF00156">
    <property type="entry name" value="Pribosyltran"/>
    <property type="match status" value="1"/>
</dbReference>
<dbReference type="SUPFAM" id="SSF53271">
    <property type="entry name" value="PRTase-like"/>
    <property type="match status" value="1"/>
</dbReference>
<dbReference type="PROSITE" id="PS00103">
    <property type="entry name" value="PUR_PYR_PR_TRANSFER"/>
    <property type="match status" value="1"/>
</dbReference>
<sequence length="178" mass="19301">MVMLADALVKRMIEVGALKFGDFVLSSGKRSRVYVDVKLASTFPDILEMISEGMAAKLKDLEFDRIACVELGGVPIAVALSLKMKKPLVIFRKEKKDYGIKGDRIGEVKEGEKVVVVEDVITTGSSALSAARRVEESGASVAAIIAVVDREESGRNFMSLLKLSDLIEAHDSIQPTES</sequence>
<protein>
    <recommendedName>
        <fullName evidence="1">Orotate phosphoribosyltransferase</fullName>
        <shortName evidence="1">OPRT</shortName>
        <shortName evidence="1">OPRTase</shortName>
        <ecNumber evidence="1">2.4.2.10</ecNumber>
    </recommendedName>
</protein>
<name>PYRE_ARCFU</name>
<evidence type="ECO:0000255" key="1">
    <source>
        <dbReference type="HAMAP-Rule" id="MF_01208"/>
    </source>
</evidence>
<organism>
    <name type="scientific">Archaeoglobus fulgidus (strain ATCC 49558 / DSM 4304 / JCM 9628 / NBRC 100126 / VC-16)</name>
    <dbReference type="NCBI Taxonomy" id="224325"/>
    <lineage>
        <taxon>Archaea</taxon>
        <taxon>Methanobacteriati</taxon>
        <taxon>Methanobacteriota</taxon>
        <taxon>Archaeoglobi</taxon>
        <taxon>Archaeoglobales</taxon>
        <taxon>Archaeoglobaceae</taxon>
        <taxon>Archaeoglobus</taxon>
    </lineage>
</organism>
<proteinExistence type="inferred from homology"/>